<name>SHQ1_CAEEL</name>
<proteinExistence type="inferred from homology"/>
<gene>
    <name type="ORF">Y48A5A.1</name>
</gene>
<comment type="function">
    <text evidence="1">Required for the quantitative accumulation of H/ACA ribonucleoproteins (RNPs).</text>
</comment>
<comment type="similarity">
    <text evidence="2">Belongs to the SHQ1 family.</text>
</comment>
<dbReference type="EMBL" id="FO081439">
    <property type="protein sequence ID" value="CCD71630.1"/>
    <property type="molecule type" value="Genomic_DNA"/>
</dbReference>
<dbReference type="RefSeq" id="NP_500150.2">
    <property type="nucleotide sequence ID" value="NM_067749.6"/>
</dbReference>
<dbReference type="SMR" id="Q9TYM6"/>
<dbReference type="BioGRID" id="42152">
    <property type="interactions" value="3"/>
</dbReference>
<dbReference type="FunCoup" id="Q9TYM6">
    <property type="interactions" value="2247"/>
</dbReference>
<dbReference type="STRING" id="6239.Y48A5A.1.1"/>
<dbReference type="iPTMnet" id="Q9TYM6"/>
<dbReference type="PaxDb" id="6239-Y48A5A.1.2"/>
<dbReference type="PeptideAtlas" id="Q9TYM6"/>
<dbReference type="EnsemblMetazoa" id="Y48A5A.1.1">
    <property type="protein sequence ID" value="Y48A5A.1.1"/>
    <property type="gene ID" value="WBGene00021655"/>
</dbReference>
<dbReference type="GeneID" id="176997"/>
<dbReference type="KEGG" id="cel:CELE_Y48A5A.1"/>
<dbReference type="UCSC" id="Y48A5A.1">
    <property type="organism name" value="c. elegans"/>
</dbReference>
<dbReference type="AGR" id="WB:WBGene00021655"/>
<dbReference type="CTD" id="176997"/>
<dbReference type="WormBase" id="Y48A5A.1">
    <property type="protein sequence ID" value="CE37290"/>
    <property type="gene ID" value="WBGene00021655"/>
</dbReference>
<dbReference type="eggNOG" id="KOG3247">
    <property type="taxonomic scope" value="Eukaryota"/>
</dbReference>
<dbReference type="GeneTree" id="ENSGT00390000007605"/>
<dbReference type="HOGENOM" id="CLU_030217_0_0_1"/>
<dbReference type="InParanoid" id="Q9TYM6"/>
<dbReference type="OMA" id="HNIESAW"/>
<dbReference type="OrthoDB" id="73639at2759"/>
<dbReference type="PhylomeDB" id="Q9TYM6"/>
<dbReference type="Reactome" id="R-CEL-171319">
    <property type="pathway name" value="Telomere Extension By Telomerase"/>
</dbReference>
<dbReference type="PRO" id="PR:Q9TYM6"/>
<dbReference type="Proteomes" id="UP000001940">
    <property type="component" value="Chromosome IV"/>
</dbReference>
<dbReference type="Bgee" id="WBGene00021655">
    <property type="expression patterns" value="Expressed in germ line (C elegans) and 4 other cell types or tissues"/>
</dbReference>
<dbReference type="GO" id="GO:0005737">
    <property type="term" value="C:cytoplasm"/>
    <property type="evidence" value="ECO:0000318"/>
    <property type="project" value="GO_Central"/>
</dbReference>
<dbReference type="GO" id="GO:0005654">
    <property type="term" value="C:nucleoplasm"/>
    <property type="evidence" value="ECO:0000318"/>
    <property type="project" value="GO_Central"/>
</dbReference>
<dbReference type="GO" id="GO:0051082">
    <property type="term" value="F:unfolded protein binding"/>
    <property type="evidence" value="ECO:0000318"/>
    <property type="project" value="GO_Central"/>
</dbReference>
<dbReference type="GO" id="GO:0000493">
    <property type="term" value="P:box H/ACA snoRNP assembly"/>
    <property type="evidence" value="ECO:0000318"/>
    <property type="project" value="GO_Central"/>
</dbReference>
<dbReference type="GO" id="GO:0022618">
    <property type="term" value="P:protein-RNA complex assembly"/>
    <property type="evidence" value="ECO:0000250"/>
    <property type="project" value="UniProtKB"/>
</dbReference>
<dbReference type="FunFam" id="2.60.40.790:FF:000080">
    <property type="entry name" value="Protein SHQ1 homolog"/>
    <property type="match status" value="1"/>
</dbReference>
<dbReference type="Gene3D" id="2.60.40.790">
    <property type="match status" value="1"/>
</dbReference>
<dbReference type="InterPro" id="IPR008978">
    <property type="entry name" value="HSP20-like_chaperone"/>
</dbReference>
<dbReference type="InterPro" id="IPR039742">
    <property type="entry name" value="Shq1"/>
</dbReference>
<dbReference type="InterPro" id="IPR048696">
    <property type="entry name" value="SHQ1-like_CS"/>
</dbReference>
<dbReference type="InterPro" id="IPR007009">
    <property type="entry name" value="Shq1_C"/>
</dbReference>
<dbReference type="PANTHER" id="PTHR12967">
    <property type="entry name" value="PROTEIN SHQ1 HOMOLOG"/>
    <property type="match status" value="1"/>
</dbReference>
<dbReference type="PANTHER" id="PTHR12967:SF0">
    <property type="entry name" value="PROTEIN SHQ1 HOMOLOG"/>
    <property type="match status" value="1"/>
</dbReference>
<dbReference type="Pfam" id="PF04925">
    <property type="entry name" value="SHQ1"/>
    <property type="match status" value="1"/>
</dbReference>
<dbReference type="Pfam" id="PF21413">
    <property type="entry name" value="SHQ1-like_CS"/>
    <property type="match status" value="1"/>
</dbReference>
<organism>
    <name type="scientific">Caenorhabditis elegans</name>
    <dbReference type="NCBI Taxonomy" id="6239"/>
    <lineage>
        <taxon>Eukaryota</taxon>
        <taxon>Metazoa</taxon>
        <taxon>Ecdysozoa</taxon>
        <taxon>Nematoda</taxon>
        <taxon>Chromadorea</taxon>
        <taxon>Rhabditida</taxon>
        <taxon>Rhabditina</taxon>
        <taxon>Rhabditomorpha</taxon>
        <taxon>Rhabditoidea</taxon>
        <taxon>Rhabditidae</taxon>
        <taxon>Peloderinae</taxon>
        <taxon>Caenorhabditis</taxon>
    </lineage>
</organism>
<evidence type="ECO:0000250" key="1"/>
<evidence type="ECO:0000305" key="2"/>
<protein>
    <recommendedName>
        <fullName>Protein SHQ1 homolog</fullName>
    </recommendedName>
</protein>
<accession>Q9TYM6</accession>
<reference key="1">
    <citation type="journal article" date="1998" name="Science">
        <title>Genome sequence of the nematode C. elegans: a platform for investigating biology.</title>
        <authorList>
            <consortium name="The C. elegans sequencing consortium"/>
        </authorList>
    </citation>
    <scope>NUCLEOTIDE SEQUENCE [LARGE SCALE GENOMIC DNA]</scope>
    <source>
        <strain>Bristol N2</strain>
    </source>
</reference>
<keyword id="KW-1185">Reference proteome</keyword>
<feature type="chain" id="PRO_0000302826" description="Protein SHQ1 homolog">
    <location>
        <begin position="1"/>
        <end position="431"/>
    </location>
</feature>
<sequence length="431" mass="49540">MLTPVFWITQDDDALLIRIRAPHGNIAELDYDHGDYMFVFTCPPYFLRLHFKQMVEEYGSGNGSVEWKSDEGEFHIKVPKMHKKEHFSNLDMITELLTPSTTHHQPHGNQLVEEMDDSEDDDEGDGSEFLVEQQPAAEPEEPKSDGKIEKFGYGFGWSKFGVIERLRDEIGKIVDILEPENVEIEKRADKLMEFDWENFDEGRYLADTLEPEEELLAVISSKFAQKLEISDEDRTKLKDLKKSKTSAKINGNDVEIMTSLIDIVFGYCYDQRVNDWESACESGWNCAKLSPSLSFFAKFSSVKECLLACTRRALTYPLYRSFQLTQRVIQDVCHVITAGGGRPALLHILCDLHRIFIESGEFRYILNDLMIADYIFWIQTVPDEILTRIQTDLTEISGKIDKYDIGWDLEVLEAEAKLANTQLDSDDEPDN</sequence>